<evidence type="ECO:0000255" key="1">
    <source>
        <dbReference type="HAMAP-Rule" id="MF_01554"/>
    </source>
</evidence>
<reference key="1">
    <citation type="journal article" date="2003" name="J. Bacteriol.">
        <title>Comparative analyses of the complete genome sequences of Pierce's disease and citrus variegated chlorosis strains of Xylella fastidiosa.</title>
        <authorList>
            <person name="Van Sluys M.A."/>
            <person name="de Oliveira M.C."/>
            <person name="Monteiro-Vitorello C.B."/>
            <person name="Miyaki C.Y."/>
            <person name="Furlan L.R."/>
            <person name="Camargo L.E.A."/>
            <person name="da Silva A.C.R."/>
            <person name="Moon D.H."/>
            <person name="Takita M.A."/>
            <person name="Lemos E.G.M."/>
            <person name="Machado M.A."/>
            <person name="Ferro M.I.T."/>
            <person name="da Silva F.R."/>
            <person name="Goldman M.H.S."/>
            <person name="Goldman G.H."/>
            <person name="Lemos M.V.F."/>
            <person name="El-Dorry H."/>
            <person name="Tsai S.M."/>
            <person name="Carrer H."/>
            <person name="Carraro D.M."/>
            <person name="de Oliveira R.C."/>
            <person name="Nunes L.R."/>
            <person name="Siqueira W.J."/>
            <person name="Coutinho L.L."/>
            <person name="Kimura E.T."/>
            <person name="Ferro E.S."/>
            <person name="Harakava R."/>
            <person name="Kuramae E.E."/>
            <person name="Marino C.L."/>
            <person name="Giglioti E."/>
            <person name="Abreu I.L."/>
            <person name="Alves L.M.C."/>
            <person name="do Amaral A.M."/>
            <person name="Baia G.S."/>
            <person name="Blanco S.R."/>
            <person name="Brito M.S."/>
            <person name="Cannavan F.S."/>
            <person name="Celestino A.V."/>
            <person name="da Cunha A.F."/>
            <person name="Fenille R.C."/>
            <person name="Ferro J.A."/>
            <person name="Formighieri E.F."/>
            <person name="Kishi L.T."/>
            <person name="Leoni S.G."/>
            <person name="Oliveira A.R."/>
            <person name="Rosa V.E. Jr."/>
            <person name="Sassaki F.T."/>
            <person name="Sena J.A.D."/>
            <person name="de Souza A.A."/>
            <person name="Truffi D."/>
            <person name="Tsukumo F."/>
            <person name="Yanai G.M."/>
            <person name="Zaros L.G."/>
            <person name="Civerolo E.L."/>
            <person name="Simpson A.J.G."/>
            <person name="Almeida N.F. Jr."/>
            <person name="Setubal J.C."/>
            <person name="Kitajima J.P."/>
        </authorList>
    </citation>
    <scope>NUCLEOTIDE SEQUENCE [LARGE SCALE GENOMIC DNA]</scope>
    <source>
        <strain>Temecula1 / ATCC 700964</strain>
    </source>
</reference>
<name>GLMM_XYLFT</name>
<sequence length="448" mass="47499">MRVSRYFGTDGIRGRVGQGLISADFVLRLGNALGRVLAQGRDTRPMVLIGKDTRISGYMFESALEAGLVAAGADVQLIGPMPTPAIAFLTNTLRADAGVVISASHNPHDDNGIKFFSAMGEKLDDATEAAIEAAIEAPFLTVDSEYLGKVKRTRDAIGRYIEFSKASVPRGFTLRGLKLVLDCAHGATYHIAPMLFRELGAELVTIGVDPDGLNINAGVGSTHLETLAATVRESGADLGIAFDGDGDRVLMTDAQGRTVDGDDLLYVLARAWRASGRLKGTVVGTLMSNYGLEQALGTLGIPFIRARVGDRYVHQALVESGGVLGGEASGHLLCLDRATTGDGIVSALQVLEVLRHEGLTLSQALLGLHKVPQKTVNVCWSGPARAAVEMPEVRQALVEAQAAVQGRGRVFLRPSGTEPVVRITVEADDVVLMQQTLDRLADVVRDAA</sequence>
<accession>Q87DJ6</accession>
<organism>
    <name type="scientific">Xylella fastidiosa (strain Temecula1 / ATCC 700964)</name>
    <dbReference type="NCBI Taxonomy" id="183190"/>
    <lineage>
        <taxon>Bacteria</taxon>
        <taxon>Pseudomonadati</taxon>
        <taxon>Pseudomonadota</taxon>
        <taxon>Gammaproteobacteria</taxon>
        <taxon>Lysobacterales</taxon>
        <taxon>Lysobacteraceae</taxon>
        <taxon>Xylella</taxon>
    </lineage>
</organism>
<comment type="function">
    <text evidence="1">Catalyzes the conversion of glucosamine-6-phosphate to glucosamine-1-phosphate.</text>
</comment>
<comment type="catalytic activity">
    <reaction evidence="1">
        <text>alpha-D-glucosamine 1-phosphate = D-glucosamine 6-phosphate</text>
        <dbReference type="Rhea" id="RHEA:23424"/>
        <dbReference type="ChEBI" id="CHEBI:58516"/>
        <dbReference type="ChEBI" id="CHEBI:58725"/>
        <dbReference type="EC" id="5.4.2.10"/>
    </reaction>
</comment>
<comment type="cofactor">
    <cofactor evidence="1">
        <name>Mg(2+)</name>
        <dbReference type="ChEBI" id="CHEBI:18420"/>
    </cofactor>
    <text evidence="1">Binds 1 Mg(2+) ion per subunit.</text>
</comment>
<comment type="PTM">
    <text evidence="1">Activated by phosphorylation.</text>
</comment>
<comment type="similarity">
    <text evidence="1">Belongs to the phosphohexose mutase family.</text>
</comment>
<dbReference type="EC" id="5.4.2.10" evidence="1"/>
<dbReference type="EMBL" id="AE009442">
    <property type="protein sequence ID" value="AAO28557.1"/>
    <property type="molecule type" value="Genomic_DNA"/>
</dbReference>
<dbReference type="RefSeq" id="WP_004089079.1">
    <property type="nucleotide sequence ID" value="NC_004556.1"/>
</dbReference>
<dbReference type="SMR" id="Q87DJ6"/>
<dbReference type="GeneID" id="93904465"/>
<dbReference type="KEGG" id="xft:PD_0686"/>
<dbReference type="HOGENOM" id="CLU_016950_7_0_6"/>
<dbReference type="Proteomes" id="UP000002516">
    <property type="component" value="Chromosome"/>
</dbReference>
<dbReference type="GO" id="GO:0005829">
    <property type="term" value="C:cytosol"/>
    <property type="evidence" value="ECO:0007669"/>
    <property type="project" value="TreeGrafter"/>
</dbReference>
<dbReference type="GO" id="GO:0000287">
    <property type="term" value="F:magnesium ion binding"/>
    <property type="evidence" value="ECO:0007669"/>
    <property type="project" value="UniProtKB-UniRule"/>
</dbReference>
<dbReference type="GO" id="GO:0008966">
    <property type="term" value="F:phosphoglucosamine mutase activity"/>
    <property type="evidence" value="ECO:0007669"/>
    <property type="project" value="UniProtKB-UniRule"/>
</dbReference>
<dbReference type="GO" id="GO:0004615">
    <property type="term" value="F:phosphomannomutase activity"/>
    <property type="evidence" value="ECO:0007669"/>
    <property type="project" value="TreeGrafter"/>
</dbReference>
<dbReference type="GO" id="GO:0005975">
    <property type="term" value="P:carbohydrate metabolic process"/>
    <property type="evidence" value="ECO:0007669"/>
    <property type="project" value="InterPro"/>
</dbReference>
<dbReference type="GO" id="GO:0009252">
    <property type="term" value="P:peptidoglycan biosynthetic process"/>
    <property type="evidence" value="ECO:0007669"/>
    <property type="project" value="TreeGrafter"/>
</dbReference>
<dbReference type="GO" id="GO:0006048">
    <property type="term" value="P:UDP-N-acetylglucosamine biosynthetic process"/>
    <property type="evidence" value="ECO:0007669"/>
    <property type="project" value="TreeGrafter"/>
</dbReference>
<dbReference type="CDD" id="cd05802">
    <property type="entry name" value="GlmM"/>
    <property type="match status" value="1"/>
</dbReference>
<dbReference type="FunFam" id="3.40.120.10:FF:000001">
    <property type="entry name" value="Phosphoglucosamine mutase"/>
    <property type="match status" value="1"/>
</dbReference>
<dbReference type="FunFam" id="3.40.120.10:FF:000003">
    <property type="entry name" value="Phosphoglucosamine mutase"/>
    <property type="match status" value="1"/>
</dbReference>
<dbReference type="Gene3D" id="3.40.120.10">
    <property type="entry name" value="Alpha-D-Glucose-1,6-Bisphosphate, subunit A, domain 3"/>
    <property type="match status" value="3"/>
</dbReference>
<dbReference type="Gene3D" id="3.30.310.50">
    <property type="entry name" value="Alpha-D-phosphohexomutase, C-terminal domain"/>
    <property type="match status" value="1"/>
</dbReference>
<dbReference type="HAMAP" id="MF_01554_B">
    <property type="entry name" value="GlmM_B"/>
    <property type="match status" value="1"/>
</dbReference>
<dbReference type="InterPro" id="IPR005844">
    <property type="entry name" value="A-D-PHexomutase_a/b/a-I"/>
</dbReference>
<dbReference type="InterPro" id="IPR016055">
    <property type="entry name" value="A-D-PHexomutase_a/b/a-I/II/III"/>
</dbReference>
<dbReference type="InterPro" id="IPR005845">
    <property type="entry name" value="A-D-PHexomutase_a/b/a-II"/>
</dbReference>
<dbReference type="InterPro" id="IPR005846">
    <property type="entry name" value="A-D-PHexomutase_a/b/a-III"/>
</dbReference>
<dbReference type="InterPro" id="IPR005843">
    <property type="entry name" value="A-D-PHexomutase_C"/>
</dbReference>
<dbReference type="InterPro" id="IPR036900">
    <property type="entry name" value="A-D-PHexomutase_C_sf"/>
</dbReference>
<dbReference type="InterPro" id="IPR016066">
    <property type="entry name" value="A-D-PHexomutase_CS"/>
</dbReference>
<dbReference type="InterPro" id="IPR005841">
    <property type="entry name" value="Alpha-D-phosphohexomutase_SF"/>
</dbReference>
<dbReference type="InterPro" id="IPR006352">
    <property type="entry name" value="GlmM_bact"/>
</dbReference>
<dbReference type="InterPro" id="IPR050060">
    <property type="entry name" value="Phosphoglucosamine_mutase"/>
</dbReference>
<dbReference type="NCBIfam" id="TIGR01455">
    <property type="entry name" value="glmM"/>
    <property type="match status" value="1"/>
</dbReference>
<dbReference type="NCBIfam" id="NF008139">
    <property type="entry name" value="PRK10887.1"/>
    <property type="match status" value="1"/>
</dbReference>
<dbReference type="PANTHER" id="PTHR42946:SF1">
    <property type="entry name" value="PHOSPHOGLUCOMUTASE (ALPHA-D-GLUCOSE-1,6-BISPHOSPHATE-DEPENDENT)"/>
    <property type="match status" value="1"/>
</dbReference>
<dbReference type="PANTHER" id="PTHR42946">
    <property type="entry name" value="PHOSPHOHEXOSE MUTASE"/>
    <property type="match status" value="1"/>
</dbReference>
<dbReference type="Pfam" id="PF02878">
    <property type="entry name" value="PGM_PMM_I"/>
    <property type="match status" value="1"/>
</dbReference>
<dbReference type="Pfam" id="PF02879">
    <property type="entry name" value="PGM_PMM_II"/>
    <property type="match status" value="1"/>
</dbReference>
<dbReference type="Pfam" id="PF02880">
    <property type="entry name" value="PGM_PMM_III"/>
    <property type="match status" value="1"/>
</dbReference>
<dbReference type="Pfam" id="PF00408">
    <property type="entry name" value="PGM_PMM_IV"/>
    <property type="match status" value="1"/>
</dbReference>
<dbReference type="PRINTS" id="PR00509">
    <property type="entry name" value="PGMPMM"/>
</dbReference>
<dbReference type="SUPFAM" id="SSF55957">
    <property type="entry name" value="Phosphoglucomutase, C-terminal domain"/>
    <property type="match status" value="1"/>
</dbReference>
<dbReference type="SUPFAM" id="SSF53738">
    <property type="entry name" value="Phosphoglucomutase, first 3 domains"/>
    <property type="match status" value="3"/>
</dbReference>
<dbReference type="PROSITE" id="PS00710">
    <property type="entry name" value="PGM_PMM"/>
    <property type="match status" value="1"/>
</dbReference>
<protein>
    <recommendedName>
        <fullName evidence="1">Phosphoglucosamine mutase</fullName>
        <ecNumber evidence="1">5.4.2.10</ecNumber>
    </recommendedName>
</protein>
<proteinExistence type="inferred from homology"/>
<keyword id="KW-0413">Isomerase</keyword>
<keyword id="KW-0460">Magnesium</keyword>
<keyword id="KW-0479">Metal-binding</keyword>
<keyword id="KW-0597">Phosphoprotein</keyword>
<keyword id="KW-1185">Reference proteome</keyword>
<feature type="chain" id="PRO_0000148009" description="Phosphoglucosamine mutase">
    <location>
        <begin position="1"/>
        <end position="448"/>
    </location>
</feature>
<feature type="active site" description="Phosphoserine intermediate" evidence="1">
    <location>
        <position position="104"/>
    </location>
</feature>
<feature type="binding site" description="via phosphate group" evidence="1">
    <location>
        <position position="104"/>
    </location>
    <ligand>
        <name>Mg(2+)</name>
        <dbReference type="ChEBI" id="CHEBI:18420"/>
    </ligand>
</feature>
<feature type="binding site" evidence="1">
    <location>
        <position position="243"/>
    </location>
    <ligand>
        <name>Mg(2+)</name>
        <dbReference type="ChEBI" id="CHEBI:18420"/>
    </ligand>
</feature>
<feature type="binding site" evidence="1">
    <location>
        <position position="245"/>
    </location>
    <ligand>
        <name>Mg(2+)</name>
        <dbReference type="ChEBI" id="CHEBI:18420"/>
    </ligand>
</feature>
<feature type="binding site" evidence="1">
    <location>
        <position position="247"/>
    </location>
    <ligand>
        <name>Mg(2+)</name>
        <dbReference type="ChEBI" id="CHEBI:18420"/>
    </ligand>
</feature>
<feature type="modified residue" description="Phosphoserine" evidence="1">
    <location>
        <position position="104"/>
    </location>
</feature>
<gene>
    <name evidence="1" type="primary">glmM</name>
    <name type="ordered locus">PD_0686</name>
</gene>